<name>VP39_NPVOP</name>
<gene>
    <name type="primary">P39</name>
    <name type="ORF">ORF90</name>
</gene>
<dbReference type="EMBL" id="M21042">
    <property type="protein sequence ID" value="AAA46688.1"/>
    <property type="molecule type" value="Genomic_DNA"/>
</dbReference>
<dbReference type="EMBL" id="U75930">
    <property type="protein sequence ID" value="AAC59089.1"/>
    <property type="molecule type" value="Genomic_DNA"/>
</dbReference>
<dbReference type="PIR" id="A31293">
    <property type="entry name" value="VCNVP1"/>
</dbReference>
<dbReference type="RefSeq" id="NP_046246.1">
    <property type="nucleotide sequence ID" value="NC_001875.2"/>
</dbReference>
<dbReference type="SMR" id="P17500"/>
<dbReference type="KEGG" id="vg:912114"/>
<dbReference type="OrthoDB" id="9419at10239"/>
<dbReference type="Proteomes" id="UP000009248">
    <property type="component" value="Genome"/>
</dbReference>
<dbReference type="GO" id="GO:0019028">
    <property type="term" value="C:viral capsid"/>
    <property type="evidence" value="ECO:0007669"/>
    <property type="project" value="UniProtKB-KW"/>
</dbReference>
<dbReference type="GO" id="GO:0005198">
    <property type="term" value="F:structural molecule activity"/>
    <property type="evidence" value="ECO:0007669"/>
    <property type="project" value="InterPro"/>
</dbReference>
<dbReference type="InterPro" id="IPR007589">
    <property type="entry name" value="Baculo_VP39"/>
</dbReference>
<dbReference type="Pfam" id="PF04501">
    <property type="entry name" value="Baculo_VP39"/>
    <property type="match status" value="1"/>
</dbReference>
<comment type="subcellular location">
    <subcellularLocation>
        <location evidence="1">Virion</location>
    </subcellularLocation>
</comment>
<comment type="miscellaneous">
    <text>Expressed late in infection.</text>
</comment>
<comment type="similarity">
    <text evidence="1">Belongs to the baculoviridae p39 family.</text>
</comment>
<accession>P17500</accession>
<sequence>MALVSPGVSSRRSTNHCIFGAIEPFDSCVTYRSPCSSDASVDDGWFICDYHLKLRFKMSKMVLPIYDEDDNQYKRTIARHLVGHKERGVKRILVPTRANYMTVFNLPGMMLAEQLIFHLIYDNRLEVNRICASLKNNENFIDNTYSVVESVYSATRNILSLTDPQAYCSRVANDDVRFFDANVVDNNYQAGNGDTVFNNMPGFLRNLIRRAVAPETLQIDSEDLRLRNCNTCVINNTGLVATVTNTELYNPVRSSDIIKTRPNRLQIRNVLKFEGDTRALERTLGRYEEYPMYVPLFLGYQLVNLQNDILRANNFLPAPFGVPQAVNNLEAQAPAAPAPAAPAPAPAAPVV</sequence>
<keyword id="KW-0167">Capsid protein</keyword>
<keyword id="KW-0426">Late protein</keyword>
<keyword id="KW-1185">Reference proteome</keyword>
<keyword id="KW-0946">Virion</keyword>
<protein>
    <recommendedName>
        <fullName>Major capsid protein</fullName>
    </recommendedName>
</protein>
<feature type="chain" id="PRO_0000132901" description="Major capsid protein">
    <location>
        <begin position="1"/>
        <end position="351"/>
    </location>
</feature>
<organismHost>
    <name type="scientific">Orgyia pseudotsugata</name>
    <name type="common">Douglas-fir tussock moth</name>
    <dbReference type="NCBI Taxonomy" id="33414"/>
</organismHost>
<evidence type="ECO:0000305" key="1"/>
<reference key="1">
    <citation type="journal article" date="1989" name="Virology">
        <title>Nucleotide sequence, transcriptional mapping, and temporal expression of the gene encoding p39, a major structural protein of the multicapsid nuclear polyhedrosis virus of Orgyia pseudotsugata.</title>
        <authorList>
            <person name="Blissard G.W."/>
            <person name="Russell R.L.Q."/>
            <person name="Rohrmann G.F."/>
            <person name="Beaudreau G.S."/>
        </authorList>
    </citation>
    <scope>NUCLEOTIDE SEQUENCE [GENOMIC DNA]</scope>
</reference>
<reference key="2">
    <citation type="journal article" date="1997" name="Virology">
        <title>The sequence of the Orgyia pseudotsugata multinucleocapsid nuclear polyhedrosis virus genome.</title>
        <authorList>
            <person name="Ahrens C.H."/>
            <person name="Russell R.R."/>
            <person name="Funk C.J."/>
            <person name="Evans J."/>
            <person name="Harwood S."/>
            <person name="Rohrmann G.F."/>
        </authorList>
    </citation>
    <scope>NUCLEOTIDE SEQUENCE [LARGE SCALE GENOMIC DNA]</scope>
</reference>
<proteinExistence type="inferred from homology"/>
<organism>
    <name type="scientific">Orgyia pseudotsugata multicapsid polyhedrosis virus</name>
    <name type="common">OpMNPV</name>
    <dbReference type="NCBI Taxonomy" id="262177"/>
    <lineage>
        <taxon>Viruses</taxon>
        <taxon>Viruses incertae sedis</taxon>
        <taxon>Naldaviricetes</taxon>
        <taxon>Lefavirales</taxon>
        <taxon>Baculoviridae</taxon>
        <taxon>Alphabaculovirus</taxon>
        <taxon>Alphabaculovirus orpseudotsugatae</taxon>
    </lineage>
</organism>